<reference key="1">
    <citation type="journal article" date="2007" name="FASEB J.">
        <title>Absence of tektin 4 causes asthenozoospermia and subfertility in male mice.</title>
        <authorList>
            <person name="Roy A."/>
            <person name="Lin Y.N."/>
            <person name="Agno J.E."/>
            <person name="DeMayo F.J."/>
            <person name="Matzuk M.M."/>
        </authorList>
    </citation>
    <scope>NUCLEOTIDE SEQUENCE [MRNA]</scope>
    <scope>FUNCTION</scope>
    <scope>SUBCELLULAR LOCATION</scope>
    <scope>TISSUE SPECIFICITY</scope>
    <scope>DEVELOPMENTAL STAGE</scope>
    <scope>DISRUPTION PHENOTYPE</scope>
    <source>
        <strain>C57BL/6 X 129</strain>
    </source>
</reference>
<reference key="2">
    <citation type="journal article" date="2005" name="Science">
        <title>The transcriptional landscape of the mammalian genome.</title>
        <authorList>
            <person name="Carninci P."/>
            <person name="Kasukawa T."/>
            <person name="Katayama S."/>
            <person name="Gough J."/>
            <person name="Frith M.C."/>
            <person name="Maeda N."/>
            <person name="Oyama R."/>
            <person name="Ravasi T."/>
            <person name="Lenhard B."/>
            <person name="Wells C."/>
            <person name="Kodzius R."/>
            <person name="Shimokawa K."/>
            <person name="Bajic V.B."/>
            <person name="Brenner S.E."/>
            <person name="Batalov S."/>
            <person name="Forrest A.R."/>
            <person name="Zavolan M."/>
            <person name="Davis M.J."/>
            <person name="Wilming L.G."/>
            <person name="Aidinis V."/>
            <person name="Allen J.E."/>
            <person name="Ambesi-Impiombato A."/>
            <person name="Apweiler R."/>
            <person name="Aturaliya R.N."/>
            <person name="Bailey T.L."/>
            <person name="Bansal M."/>
            <person name="Baxter L."/>
            <person name="Beisel K.W."/>
            <person name="Bersano T."/>
            <person name="Bono H."/>
            <person name="Chalk A.M."/>
            <person name="Chiu K.P."/>
            <person name="Choudhary V."/>
            <person name="Christoffels A."/>
            <person name="Clutterbuck D.R."/>
            <person name="Crowe M.L."/>
            <person name="Dalla E."/>
            <person name="Dalrymple B.P."/>
            <person name="de Bono B."/>
            <person name="Della Gatta G."/>
            <person name="di Bernardo D."/>
            <person name="Down T."/>
            <person name="Engstrom P."/>
            <person name="Fagiolini M."/>
            <person name="Faulkner G."/>
            <person name="Fletcher C.F."/>
            <person name="Fukushima T."/>
            <person name="Furuno M."/>
            <person name="Futaki S."/>
            <person name="Gariboldi M."/>
            <person name="Georgii-Hemming P."/>
            <person name="Gingeras T.R."/>
            <person name="Gojobori T."/>
            <person name="Green R.E."/>
            <person name="Gustincich S."/>
            <person name="Harbers M."/>
            <person name="Hayashi Y."/>
            <person name="Hensch T.K."/>
            <person name="Hirokawa N."/>
            <person name="Hill D."/>
            <person name="Huminiecki L."/>
            <person name="Iacono M."/>
            <person name="Ikeo K."/>
            <person name="Iwama A."/>
            <person name="Ishikawa T."/>
            <person name="Jakt M."/>
            <person name="Kanapin A."/>
            <person name="Katoh M."/>
            <person name="Kawasawa Y."/>
            <person name="Kelso J."/>
            <person name="Kitamura H."/>
            <person name="Kitano H."/>
            <person name="Kollias G."/>
            <person name="Krishnan S.P."/>
            <person name="Kruger A."/>
            <person name="Kummerfeld S.K."/>
            <person name="Kurochkin I.V."/>
            <person name="Lareau L.F."/>
            <person name="Lazarevic D."/>
            <person name="Lipovich L."/>
            <person name="Liu J."/>
            <person name="Liuni S."/>
            <person name="McWilliam S."/>
            <person name="Madan Babu M."/>
            <person name="Madera M."/>
            <person name="Marchionni L."/>
            <person name="Matsuda H."/>
            <person name="Matsuzawa S."/>
            <person name="Miki H."/>
            <person name="Mignone F."/>
            <person name="Miyake S."/>
            <person name="Morris K."/>
            <person name="Mottagui-Tabar S."/>
            <person name="Mulder N."/>
            <person name="Nakano N."/>
            <person name="Nakauchi H."/>
            <person name="Ng P."/>
            <person name="Nilsson R."/>
            <person name="Nishiguchi S."/>
            <person name="Nishikawa S."/>
            <person name="Nori F."/>
            <person name="Ohara O."/>
            <person name="Okazaki Y."/>
            <person name="Orlando V."/>
            <person name="Pang K.C."/>
            <person name="Pavan W.J."/>
            <person name="Pavesi G."/>
            <person name="Pesole G."/>
            <person name="Petrovsky N."/>
            <person name="Piazza S."/>
            <person name="Reed J."/>
            <person name="Reid J.F."/>
            <person name="Ring B.Z."/>
            <person name="Ringwald M."/>
            <person name="Rost B."/>
            <person name="Ruan Y."/>
            <person name="Salzberg S.L."/>
            <person name="Sandelin A."/>
            <person name="Schneider C."/>
            <person name="Schoenbach C."/>
            <person name="Sekiguchi K."/>
            <person name="Semple C.A."/>
            <person name="Seno S."/>
            <person name="Sessa L."/>
            <person name="Sheng Y."/>
            <person name="Shibata Y."/>
            <person name="Shimada H."/>
            <person name="Shimada K."/>
            <person name="Silva D."/>
            <person name="Sinclair B."/>
            <person name="Sperling S."/>
            <person name="Stupka E."/>
            <person name="Sugiura K."/>
            <person name="Sultana R."/>
            <person name="Takenaka Y."/>
            <person name="Taki K."/>
            <person name="Tammoja K."/>
            <person name="Tan S.L."/>
            <person name="Tang S."/>
            <person name="Taylor M.S."/>
            <person name="Tegner J."/>
            <person name="Teichmann S.A."/>
            <person name="Ueda H.R."/>
            <person name="van Nimwegen E."/>
            <person name="Verardo R."/>
            <person name="Wei C.L."/>
            <person name="Yagi K."/>
            <person name="Yamanishi H."/>
            <person name="Zabarovsky E."/>
            <person name="Zhu S."/>
            <person name="Zimmer A."/>
            <person name="Hide W."/>
            <person name="Bult C."/>
            <person name="Grimmond S.M."/>
            <person name="Teasdale R.D."/>
            <person name="Liu E.T."/>
            <person name="Brusic V."/>
            <person name="Quackenbush J."/>
            <person name="Wahlestedt C."/>
            <person name="Mattick J.S."/>
            <person name="Hume D.A."/>
            <person name="Kai C."/>
            <person name="Sasaki D."/>
            <person name="Tomaru Y."/>
            <person name="Fukuda S."/>
            <person name="Kanamori-Katayama M."/>
            <person name="Suzuki M."/>
            <person name="Aoki J."/>
            <person name="Arakawa T."/>
            <person name="Iida J."/>
            <person name="Imamura K."/>
            <person name="Itoh M."/>
            <person name="Kato T."/>
            <person name="Kawaji H."/>
            <person name="Kawagashira N."/>
            <person name="Kawashima T."/>
            <person name="Kojima M."/>
            <person name="Kondo S."/>
            <person name="Konno H."/>
            <person name="Nakano K."/>
            <person name="Ninomiya N."/>
            <person name="Nishio T."/>
            <person name="Okada M."/>
            <person name="Plessy C."/>
            <person name="Shibata K."/>
            <person name="Shiraki T."/>
            <person name="Suzuki S."/>
            <person name="Tagami M."/>
            <person name="Waki K."/>
            <person name="Watahiki A."/>
            <person name="Okamura-Oho Y."/>
            <person name="Suzuki H."/>
            <person name="Kawai J."/>
            <person name="Hayashizaki Y."/>
        </authorList>
    </citation>
    <scope>NUCLEOTIDE SEQUENCE [LARGE SCALE MRNA]</scope>
    <source>
        <strain>C57BL/6J</strain>
        <tissue>Testis</tissue>
    </source>
</reference>
<reference key="3">
    <citation type="journal article" date="2009" name="PLoS Biol.">
        <title>Lineage-specific biology revealed by a finished genome assembly of the mouse.</title>
        <authorList>
            <person name="Church D.M."/>
            <person name="Goodstadt L."/>
            <person name="Hillier L.W."/>
            <person name="Zody M.C."/>
            <person name="Goldstein S."/>
            <person name="She X."/>
            <person name="Bult C.J."/>
            <person name="Agarwala R."/>
            <person name="Cherry J.L."/>
            <person name="DiCuccio M."/>
            <person name="Hlavina W."/>
            <person name="Kapustin Y."/>
            <person name="Meric P."/>
            <person name="Maglott D."/>
            <person name="Birtle Z."/>
            <person name="Marques A.C."/>
            <person name="Graves T."/>
            <person name="Zhou S."/>
            <person name="Teague B."/>
            <person name="Potamousis K."/>
            <person name="Churas C."/>
            <person name="Place M."/>
            <person name="Herschleb J."/>
            <person name="Runnheim R."/>
            <person name="Forrest D."/>
            <person name="Amos-Landgraf J."/>
            <person name="Schwartz D.C."/>
            <person name="Cheng Z."/>
            <person name="Lindblad-Toh K."/>
            <person name="Eichler E.E."/>
            <person name="Ponting C.P."/>
        </authorList>
    </citation>
    <scope>NUCLEOTIDE SEQUENCE [LARGE SCALE GENOMIC DNA]</scope>
    <source>
        <strain>C57BL/6J</strain>
    </source>
</reference>
<reference key="4">
    <citation type="journal article" date="2004" name="Genome Res.">
        <title>The status, quality, and expansion of the NIH full-length cDNA project: the Mammalian Gene Collection (MGC).</title>
        <authorList>
            <consortium name="The MGC Project Team"/>
        </authorList>
    </citation>
    <scope>NUCLEOTIDE SEQUENCE [LARGE SCALE MRNA]</scope>
</reference>
<reference key="5">
    <citation type="journal article" date="2006" name="Mol. Reprod. Dev.">
        <title>Tektin 4 is located on outer dense fibers, not associated with axonemal tubulins of flagella in rodent spermatozoa.</title>
        <authorList>
            <person name="Iida H."/>
            <person name="Honda Y."/>
            <person name="Matsuyama T."/>
            <person name="Shibata Y."/>
            <person name="Inai T."/>
        </authorList>
    </citation>
    <scope>SUBCELLULAR LOCATION</scope>
    <scope>TISSUE SPECIFICITY</scope>
</reference>
<reference key="6">
    <citation type="journal article" date="2010" name="Cell">
        <title>A tissue-specific atlas of mouse protein phosphorylation and expression.</title>
        <authorList>
            <person name="Huttlin E.L."/>
            <person name="Jedrychowski M.P."/>
            <person name="Elias J.E."/>
            <person name="Goswami T."/>
            <person name="Rad R."/>
            <person name="Beausoleil S.A."/>
            <person name="Villen J."/>
            <person name="Haas W."/>
            <person name="Sowa M.E."/>
            <person name="Gygi S.P."/>
        </authorList>
    </citation>
    <scope>IDENTIFICATION BY MASS SPECTROMETRY [LARGE SCALE ANALYSIS]</scope>
    <source>
        <tissue>Testis</tissue>
    </source>
</reference>
<reference key="7">
    <citation type="journal article" date="2023" name="Hum. Mol. Genet.">
        <title>Bi-allelic human TEKT3 mutations cause male infertility with oligoasthenoteratozoospermia due to acrosomal hypoplasia and reduced progressive motility.</title>
        <authorList>
            <person name="Liu Y."/>
            <person name="Li Y."/>
            <person name="Meng L."/>
            <person name="Li K."/>
            <person name="Gao Y."/>
            <person name="Lv M."/>
            <person name="Guo R."/>
            <person name="Xu Y."/>
            <person name="Zhou P."/>
            <person name="Wei Z."/>
            <person name="He X."/>
            <person name="Cao Y."/>
            <person name="Wu H."/>
            <person name="Tan Y."/>
            <person name="Hua R."/>
        </authorList>
    </citation>
    <scope>TISSUE SPECIFICITY</scope>
</reference>
<reference key="8">
    <citation type="journal article" date="2022" name="Sci. Adv.">
        <title>Loss-of-function mutations in CEP78 cause male infertility in humans and mice.</title>
        <authorList>
            <person name="Zhang X."/>
            <person name="Zheng R."/>
            <person name="Liang C."/>
            <person name="Liu H."/>
            <person name="Zhang X."/>
            <person name="Ma Y."/>
            <person name="Liu M."/>
            <person name="Zhang W."/>
            <person name="Yang Y."/>
            <person name="Liu M."/>
            <person name="Jiang C."/>
            <person name="Ren Q."/>
            <person name="Wang Y."/>
            <person name="Chen S."/>
            <person name="Yang Y."/>
            <person name="Shen Y."/>
        </authorList>
    </citation>
    <scope>UBIQUITINATION</scope>
    <scope>DEUBIQUITINATION</scope>
</reference>
<reference evidence="13" key="9">
    <citation type="journal article" date="2023" name="Cell">
        <title>Structures of sperm flagellar doublet microtubules expand the genetic spectrum of male infertility.</title>
        <authorList>
            <person name="Zhou L."/>
            <person name="Liu H."/>
            <person name="Liu S."/>
            <person name="Yang X."/>
            <person name="Dong Y."/>
            <person name="Pan Y."/>
            <person name="Xiao Z."/>
            <person name="Zheng B."/>
            <person name="Sun Y."/>
            <person name="Huang P."/>
            <person name="Zhang X."/>
            <person name="Hu J."/>
            <person name="Sun R."/>
            <person name="Feng S."/>
            <person name="Zhu Y."/>
            <person name="Liu M."/>
            <person name="Gui M."/>
            <person name="Wu J."/>
        </authorList>
    </citation>
    <scope>STRUCTURE BY ELECTRON MICROSCOPY (3.50 ANGSTROMS) OF SPERM FLAGELLAR DOUBLET MICROTUBULES</scope>
    <scope>FUNCTION</scope>
    <scope>SUBCELLULAR LOCATION</scope>
    <scope>SUBUNIT</scope>
</reference>
<reference evidence="14" key="10">
    <citation type="journal article" date="2023" name="Cell">
        <title>De novo protein identification in mammalian sperm using in situ cryoelectron tomography and AlphaFold2 docking.</title>
        <authorList>
            <person name="Chen Z."/>
            <person name="Shiozaki M."/>
            <person name="Haas K.M."/>
            <person name="Skinner W.M."/>
            <person name="Zhao S."/>
            <person name="Guo C."/>
            <person name="Polacco B.J."/>
            <person name="Yu Z."/>
            <person name="Krogan N.J."/>
            <person name="Lishko P.V."/>
            <person name="Kaake R.M."/>
            <person name="Vale R.D."/>
            <person name="Agard D.A."/>
        </authorList>
    </citation>
    <scope>STRUCTURE BY ELECTRON MICROSCOPY (7.70 ANGSTROMS) OF SPERM FLAGELLAR DOUBLET MICROTUBULES</scope>
    <scope>FUNCTION</scope>
    <scope>SUBCELLULAR LOCATION</scope>
    <scope>SUBUNIT</scope>
</reference>
<reference evidence="11 12" key="11">
    <citation type="journal article" date="2023" name="Cell Discov.">
        <title>In-cell structural insight into the stability of sperm microtubule doublet.</title>
        <authorList>
            <person name="Tai L."/>
            <person name="Yin G."/>
            <person name="Huang X."/>
            <person name="Sun F."/>
            <person name="Zhu Y."/>
        </authorList>
    </citation>
    <scope>STRUCTURE BY ELECTRON MICROSCOPY (4.50 ANGSTROMS)</scope>
    <scope>FUNCTION</scope>
    <scope>SUBUNIT</scope>
    <scope>SUBCELLULAR LOCATION</scope>
</reference>
<keyword id="KW-0002">3D-structure</keyword>
<keyword id="KW-0966">Cell projection</keyword>
<keyword id="KW-0969">Cilium</keyword>
<keyword id="KW-0970">Cilium biogenesis/degradation</keyword>
<keyword id="KW-0175">Coiled coil</keyword>
<keyword id="KW-0963">Cytoplasm</keyword>
<keyword id="KW-0206">Cytoskeleton</keyword>
<keyword id="KW-0282">Flagellum</keyword>
<keyword id="KW-1185">Reference proteome</keyword>
<keyword id="KW-0832">Ubl conjugation</keyword>
<gene>
    <name type="primary">Tekt4</name>
</gene>
<feature type="chain" id="PRO_0000261163" description="Tektin-4">
    <location>
        <begin position="1"/>
        <end position="447"/>
    </location>
</feature>
<feature type="coiled-coil region" evidence="2">
    <location>
        <begin position="322"/>
        <end position="348"/>
    </location>
</feature>
<feature type="coiled-coil region" evidence="2">
    <location>
        <begin position="375"/>
        <end position="423"/>
    </location>
</feature>
<feature type="sequence conflict" description="In Ref. 4; AAI17511/AAI17527." ref="4">
    <original>H</original>
    <variation>Q</variation>
    <location>
        <position position="262"/>
    </location>
</feature>
<feature type="sequence conflict" description="In Ref. 2; BAB24268." evidence="10" ref="2">
    <original>R</original>
    <variation>S</variation>
    <location>
        <position position="434"/>
    </location>
</feature>
<comment type="function">
    <text evidence="4 7 8 9">Microtubule inner protein (MIP) part of the dynein-decorated doublet microtubules (DMTs) in cilia and flagellar axoneme. Forms filamentous polymers in the walls of ciliary and flagellar microtubules (PubMed:37295417, PubMed:37865089, PubMed:37989994). Contributes to normal sperm motility (PubMed:17244819).</text>
</comment>
<comment type="subunit">
    <text evidence="7 8 9">Microtubule inner protein component of sperm flagellar doublet microtubules.</text>
</comment>
<comment type="subcellular location">
    <subcellularLocation>
        <location evidence="1">Cytoplasm</location>
        <location evidence="1">Cytoskeleton</location>
        <location evidence="1">Cilium axoneme</location>
    </subcellularLocation>
    <subcellularLocation>
        <location evidence="3 4 7 8 9">Cytoplasm</location>
        <location evidence="3 4 7 8 9">Cytoskeleton</location>
        <location evidence="3 4 7 8 9">Flagellum axoneme</location>
    </subcellularLocation>
    <text evidence="3">Found in the abaxial (convex) surface of outer dense fibers in sperm flagella.</text>
</comment>
<comment type="tissue specificity">
    <text evidence="3 4 6">Detected in testis, where it is weakly expressed in round spermatids, and strongly expressed in the flagellum of step 16 elongated spermatids (at protein level) (PubMed:17244819). Expressed in spermatozoa (PubMed:36708031). In the sperm flagellum, localizes to the principal piece and midpiece (at protein level) (PubMed:16596631, PubMed:17244819). Specifically expressed in testis; not detected in other tissues tested (PubMed:17244819).</text>
</comment>
<comment type="developmental stage">
    <text evidence="4">Detected in testis from postnatal day 16 onwards, reaching maximal levels by postnatal day 18.</text>
</comment>
<comment type="PTM">
    <text evidence="5">Ubiquitinated, leading to its degradation. Deubiquitinated by USP16, promoting its stability.</text>
</comment>
<comment type="disruption phenotype">
    <text evidence="4">In a 129S5/SvEvBrd genetic background, males show progressive reduction in fertility with almost complete loss of fertility after 5 months of breeding. Testis weight and histology appear normal. Spermatozoa have significantly reduced forward motility. The sperm flagellum shows defective bending in the midpiece region which impairs waveform propagation and forward propulsion. Sperm ATP levels deplete significantly over time, probably as a result of excess energy consumption from inefficient flagellar beating. The ultrastructure of the flagellum has some subtle abnormalities with an enlarged space between the mitochondrial sheath and the outer dense fibers. In a mixed C57BL/6J;129S5/SvEvBrd genetic background, male fertility is not significantly affected.</text>
</comment>
<comment type="similarity">
    <text evidence="10">Belongs to the tektin family.</text>
</comment>
<sequence>MAQTGVLLTKEPAPQSIDVCELPRKEYEVACNTGAYTSSGLATAGFRTAKYLRDEWFQNSYARYHQAFADRDYSERQRHESGQLVAETGALAQRTQLDSTRKVGERLEDMHCWKSELQREIDELSSETDLMMAQKLRLQRALDATSVPYSIATDNLQCRERRQHPDLVRDYVEVELLKETELIRNIQELLKRTIGQAVDQIRLNREHKESCEMNWSDKVEVYNIDDTCSRYTNESTQVQFYPHSSKFEESASTPETWAKFNHDNLLRAERERLASVNLRKLIDCILRDTAEDLRLQCDAVNSAFSSRCQELDDSLQKLQYHLRKTLTEITDQEHQIAALKQAIKDKEAPLRVAQTRLYQRSHRPNVELCRDNAQFRLLSEVEELNMSLRALKEKLQDAEQALRNLEDSRMSLEKDIAVKTNSLFIDRQKCMTHRNRYPSVLQLAGYQ</sequence>
<proteinExistence type="evidence at protein level"/>
<accession>Q149S1</accession>
<accession>A0A0R4J051</accession>
<accession>Q3ZTL6</accession>
<accession>Q9DAH3</accession>
<name>TEKT4_MOUSE</name>
<dbReference type="EMBL" id="AY485267">
    <property type="protein sequence ID" value="AAS55789.1"/>
    <property type="molecule type" value="mRNA"/>
</dbReference>
<dbReference type="EMBL" id="AK005842">
    <property type="protein sequence ID" value="BAB24268.1"/>
    <property type="molecule type" value="mRNA"/>
</dbReference>
<dbReference type="EMBL" id="AC131323">
    <property type="status" value="NOT_ANNOTATED_CDS"/>
    <property type="molecule type" value="Genomic_DNA"/>
</dbReference>
<dbReference type="EMBL" id="BC117510">
    <property type="protein sequence ID" value="AAI17511.1"/>
    <property type="molecule type" value="mRNA"/>
</dbReference>
<dbReference type="EMBL" id="BC117526">
    <property type="protein sequence ID" value="AAI17527.1"/>
    <property type="molecule type" value="mRNA"/>
</dbReference>
<dbReference type="CCDS" id="CCDS28519.1"/>
<dbReference type="RefSeq" id="NP_082227.1">
    <property type="nucleotide sequence ID" value="NM_027951.2"/>
</dbReference>
<dbReference type="PDB" id="8I7O">
    <property type="method" value="EM"/>
    <property type="resolution" value="4.50 A"/>
    <property type="chains" value="D2/D3/D4/D7/D8/D9=1-447"/>
</dbReference>
<dbReference type="PDB" id="8I7R">
    <property type="method" value="EM"/>
    <property type="resolution" value="6.50 A"/>
    <property type="chains" value="D1/D2/D3/D4/D5/D6/D7/D8/D9/Da=1-447"/>
</dbReference>
<dbReference type="PDB" id="8IYJ">
    <property type="method" value="EM"/>
    <property type="resolution" value="3.50 A"/>
    <property type="chains" value="D0/D1/D2/D3/D4/D5/T0/T1/T2/T3/T4/T5=1-447"/>
</dbReference>
<dbReference type="PDB" id="8TO0">
    <property type="method" value="EM"/>
    <property type="resolution" value="7.70 A"/>
    <property type="chains" value="Aa/Ab/Ac/Ad/Af/Ag/Ah/Ai=1-447"/>
</dbReference>
<dbReference type="PDBsum" id="8I7O"/>
<dbReference type="PDBsum" id="8I7R"/>
<dbReference type="PDBsum" id="8IYJ"/>
<dbReference type="PDBsum" id="8TO0"/>
<dbReference type="EMDB" id="EMD-35229"/>
<dbReference type="EMDB" id="EMD-35230"/>
<dbReference type="EMDB" id="EMD-35823"/>
<dbReference type="EMDB" id="EMD-41431"/>
<dbReference type="SMR" id="Q149S1"/>
<dbReference type="BioGRID" id="214969">
    <property type="interactions" value="1"/>
</dbReference>
<dbReference type="FunCoup" id="Q149S1">
    <property type="interactions" value="50"/>
</dbReference>
<dbReference type="STRING" id="10090.ENSMUSP00000025002"/>
<dbReference type="iPTMnet" id="Q149S1"/>
<dbReference type="PhosphoSitePlus" id="Q149S1"/>
<dbReference type="SwissPalm" id="Q149S1"/>
<dbReference type="REPRODUCTION-2DPAGE" id="Q149S1"/>
<dbReference type="PaxDb" id="10090-ENSMUSP00000025002"/>
<dbReference type="ProteomicsDB" id="262866"/>
<dbReference type="ProteomicsDB" id="368063"/>
<dbReference type="Antibodypedia" id="32286">
    <property type="antibodies" value="173 antibodies from 22 providers"/>
</dbReference>
<dbReference type="Ensembl" id="ENSMUST00000025002.4">
    <property type="protein sequence ID" value="ENSMUSP00000025002.2"/>
    <property type="gene ID" value="ENSMUSG00000024175.4"/>
</dbReference>
<dbReference type="GeneID" id="71840"/>
<dbReference type="KEGG" id="mmu:71840"/>
<dbReference type="UCSC" id="uc008baw.1">
    <property type="organism name" value="mouse"/>
</dbReference>
<dbReference type="AGR" id="MGI:1919090"/>
<dbReference type="CTD" id="150483"/>
<dbReference type="MGI" id="MGI:1919090">
    <property type="gene designation" value="Tekt4"/>
</dbReference>
<dbReference type="VEuPathDB" id="HostDB:ENSMUSG00000024175"/>
<dbReference type="eggNOG" id="KOG2685">
    <property type="taxonomic scope" value="Eukaryota"/>
</dbReference>
<dbReference type="GeneTree" id="ENSGT00950000182894"/>
<dbReference type="InParanoid" id="Q149S1"/>
<dbReference type="OMA" id="RNLEDTH"/>
<dbReference type="OrthoDB" id="48954at9989"/>
<dbReference type="PhylomeDB" id="Q149S1"/>
<dbReference type="TreeFam" id="TF320754"/>
<dbReference type="BioGRID-ORCS" id="71840">
    <property type="hits" value="4 hits in 76 CRISPR screens"/>
</dbReference>
<dbReference type="CD-CODE" id="DE1E139C">
    <property type="entry name" value="Chromatoid body"/>
</dbReference>
<dbReference type="PRO" id="PR:Q149S1"/>
<dbReference type="Proteomes" id="UP000000589">
    <property type="component" value="Chromosome 17"/>
</dbReference>
<dbReference type="RNAct" id="Q149S1">
    <property type="molecule type" value="protein"/>
</dbReference>
<dbReference type="Bgee" id="ENSMUSG00000024175">
    <property type="expression patterns" value="Expressed in spermatid and 43 other cell types or tissues"/>
</dbReference>
<dbReference type="ExpressionAtlas" id="Q149S1">
    <property type="expression patterns" value="baseline and differential"/>
</dbReference>
<dbReference type="GO" id="GO:0160111">
    <property type="term" value="C:axonemal A tubule inner sheath"/>
    <property type="evidence" value="ECO:0000314"/>
    <property type="project" value="UniProtKB"/>
</dbReference>
<dbReference type="GO" id="GO:0005879">
    <property type="term" value="C:axonemal microtubule"/>
    <property type="evidence" value="ECO:0000250"/>
    <property type="project" value="UniProtKB"/>
</dbReference>
<dbReference type="GO" id="GO:0036126">
    <property type="term" value="C:sperm flagellum"/>
    <property type="evidence" value="ECO:0000314"/>
    <property type="project" value="UniProtKB"/>
</dbReference>
<dbReference type="GO" id="GO:0097225">
    <property type="term" value="C:sperm midpiece"/>
    <property type="evidence" value="ECO:0000314"/>
    <property type="project" value="MGI"/>
</dbReference>
<dbReference type="GO" id="GO:0097228">
    <property type="term" value="C:sperm principal piece"/>
    <property type="evidence" value="ECO:0000314"/>
    <property type="project" value="MGI"/>
</dbReference>
<dbReference type="GO" id="GO:0030030">
    <property type="term" value="P:cell projection organization"/>
    <property type="evidence" value="ECO:0007669"/>
    <property type="project" value="UniProtKB-KW"/>
</dbReference>
<dbReference type="GO" id="GO:0060294">
    <property type="term" value="P:cilium movement involved in cell motility"/>
    <property type="evidence" value="ECO:0000315"/>
    <property type="project" value="MGI"/>
</dbReference>
<dbReference type="GO" id="GO:0030317">
    <property type="term" value="P:flagellated sperm motility"/>
    <property type="evidence" value="ECO:0000314"/>
    <property type="project" value="UniProtKB"/>
</dbReference>
<dbReference type="GO" id="GO:0060378">
    <property type="term" value="P:regulation of brood size"/>
    <property type="evidence" value="ECO:0000316"/>
    <property type="project" value="UniProtKB"/>
</dbReference>
<dbReference type="InterPro" id="IPR048256">
    <property type="entry name" value="Tektin-like"/>
</dbReference>
<dbReference type="InterPro" id="IPR000435">
    <property type="entry name" value="Tektins"/>
</dbReference>
<dbReference type="PANTHER" id="PTHR19960">
    <property type="entry name" value="TEKTIN"/>
    <property type="match status" value="1"/>
</dbReference>
<dbReference type="PANTHER" id="PTHR19960:SF12">
    <property type="entry name" value="TEKTIN-4"/>
    <property type="match status" value="1"/>
</dbReference>
<dbReference type="Pfam" id="PF03148">
    <property type="entry name" value="Tektin"/>
    <property type="match status" value="1"/>
</dbReference>
<dbReference type="PRINTS" id="PR00511">
    <property type="entry name" value="TEKTIN"/>
</dbReference>
<protein>
    <recommendedName>
        <fullName>Tektin-4</fullName>
    </recommendedName>
    <alternativeName>
        <fullName>Testicular microtubules-related protein 4</fullName>
    </alternativeName>
</protein>
<evidence type="ECO:0000250" key="1">
    <source>
        <dbReference type="UniProtKB" id="Q2TA38"/>
    </source>
</evidence>
<evidence type="ECO:0000255" key="2"/>
<evidence type="ECO:0000269" key="3">
    <source>
    </source>
</evidence>
<evidence type="ECO:0000269" key="4">
    <source>
    </source>
</evidence>
<evidence type="ECO:0000269" key="5">
    <source>
    </source>
</evidence>
<evidence type="ECO:0000269" key="6">
    <source>
    </source>
</evidence>
<evidence type="ECO:0000269" key="7">
    <source>
    </source>
</evidence>
<evidence type="ECO:0000269" key="8">
    <source>
    </source>
</evidence>
<evidence type="ECO:0000269" key="9">
    <source>
    </source>
</evidence>
<evidence type="ECO:0000305" key="10"/>
<evidence type="ECO:0007744" key="11">
    <source>
        <dbReference type="PDB" id="8I7O"/>
    </source>
</evidence>
<evidence type="ECO:0007744" key="12">
    <source>
        <dbReference type="PDB" id="8I7R"/>
    </source>
</evidence>
<evidence type="ECO:0007744" key="13">
    <source>
        <dbReference type="PDB" id="8IYJ"/>
    </source>
</evidence>
<evidence type="ECO:0007744" key="14">
    <source>
        <dbReference type="PDB" id="8TO0"/>
    </source>
</evidence>
<organism>
    <name type="scientific">Mus musculus</name>
    <name type="common">Mouse</name>
    <dbReference type="NCBI Taxonomy" id="10090"/>
    <lineage>
        <taxon>Eukaryota</taxon>
        <taxon>Metazoa</taxon>
        <taxon>Chordata</taxon>
        <taxon>Craniata</taxon>
        <taxon>Vertebrata</taxon>
        <taxon>Euteleostomi</taxon>
        <taxon>Mammalia</taxon>
        <taxon>Eutheria</taxon>
        <taxon>Euarchontoglires</taxon>
        <taxon>Glires</taxon>
        <taxon>Rodentia</taxon>
        <taxon>Myomorpha</taxon>
        <taxon>Muroidea</taxon>
        <taxon>Muridae</taxon>
        <taxon>Murinae</taxon>
        <taxon>Mus</taxon>
        <taxon>Mus</taxon>
    </lineage>
</organism>